<name>SEM1A_TRICF</name>
<proteinExistence type="evidence at transcript level"/>
<evidence type="ECO:0000255" key="1"/>
<evidence type="ECO:0000255" key="2">
    <source>
        <dbReference type="PROSITE-ProRule" id="PRU00352"/>
    </source>
</evidence>
<evidence type="ECO:0000305" key="3"/>
<gene>
    <name type="primary">SEMA-1A</name>
    <name type="synonym">TSEMA-I</name>
</gene>
<organism>
    <name type="scientific">Tribolium confusum</name>
    <name type="common">Confused flour beetle</name>
    <dbReference type="NCBI Taxonomy" id="7071"/>
    <lineage>
        <taxon>Eukaryota</taxon>
        <taxon>Metazoa</taxon>
        <taxon>Ecdysozoa</taxon>
        <taxon>Arthropoda</taxon>
        <taxon>Hexapoda</taxon>
        <taxon>Insecta</taxon>
        <taxon>Pterygota</taxon>
        <taxon>Neoptera</taxon>
        <taxon>Endopterygota</taxon>
        <taxon>Coleoptera</taxon>
        <taxon>Polyphaga</taxon>
        <taxon>Cucujiformia</taxon>
        <taxon>Tenebrionidae</taxon>
        <taxon>Tenebrionidae incertae sedis</taxon>
        <taxon>Tribolium</taxon>
    </lineage>
</organism>
<reference key="1">
    <citation type="journal article" date="1993" name="Cell">
        <title>The semaphorin genes encode a family of transmembrane and secreted growth cone guidance molecules.</title>
        <authorList>
            <person name="Kolodkin A.L."/>
            <person name="Matthes D.J."/>
            <person name="Goodman C.S."/>
        </authorList>
    </citation>
    <scope>NUCLEOTIDE SEQUENCE [MRNA]</scope>
    <source>
        <tissue>Embryo</tissue>
    </source>
</reference>
<protein>
    <recommendedName>
        <fullName>Semaphorin-1A</fullName>
    </recommendedName>
    <alternativeName>
        <fullName>Semaphorin-I</fullName>
    </alternativeName>
</protein>
<keyword id="KW-0217">Developmental protein</keyword>
<keyword id="KW-0221">Differentiation</keyword>
<keyword id="KW-1015">Disulfide bond</keyword>
<keyword id="KW-0325">Glycoprotein</keyword>
<keyword id="KW-0472">Membrane</keyword>
<keyword id="KW-0524">Neurogenesis</keyword>
<keyword id="KW-0732">Signal</keyword>
<keyword id="KW-0812">Transmembrane</keyword>
<keyword id="KW-1133">Transmembrane helix</keyword>
<accession>Q26972</accession>
<comment type="function">
    <text>Plays a role in growth cones guidance.</text>
</comment>
<comment type="subcellular location">
    <subcellularLocation>
        <location>Membrane</location>
        <topology>Single-pass type I membrane protein</topology>
    </subcellularLocation>
</comment>
<comment type="similarity">
    <text evidence="3">Belongs to the semaphorin family.</text>
</comment>
<sequence length="712" mass="79752">MVVKILVWSICLIALCHAWMPDSSSKLINHFKSVESKSFTGNATFPDHFIVLNQDETSILVGGRNRVYNLSIFDLSERKGGRIDWPSSDAHGQLCILKGKTDDDCQNYIRILYSSEPGKLVICGTNSYKPLCRTYAFKEGKYLVEKEVEGIGLCPYNPEHNSTSVSYNGQLFSATVADFSGGDPLIYREPQRTELSDLKQLNAPNFVNSVAYGDYIFFFYRETAVEYMNCGKVIYSRVARVCKDDKGGPHQSRDRWTSFLKARLNCSIPGEYPFYFDEIQSTSDIVEGRYNSDDSKKIIYGILTTPVNAIGGSAICAYQMADILRVFEGSFKHQETINSNWLPVPQNLVPEPRPGQCVRDSRILPDKNVNFIKTHSLMEDVPALFGKPVLVRVSLQYRFTAITVDPQVKTINNQYLDVLYIGTDDGKVLKAVNIPKRHAKALLYRKYRTSVHPHGAPVKQLKIAPGYGKVVVVGKDEIRLANLNHCASKTRCKDCVELQDPHCAWDAKQNLCVSIDTVTSYRFLIQDVVRGDDNKCWSPQTDKKTVIKNKPSEVENEITNSIDEKDLDSSDPLIKTGLDDDSDCDPVSENSIGGCAVRQQLVIYTAGTLHIVVVVVSIVGLFSWLYSGLSVFAKFHSDSQYPEAPFIEQHNHLERLSANQTGYLTPRANKAVNLVVKVSSSTPRPKKDNLDVSKDLNIASDGTLQKIKKTYI</sequence>
<feature type="signal peptide" evidence="1">
    <location>
        <begin position="1"/>
        <end position="20"/>
    </location>
</feature>
<feature type="chain" id="PRO_0000032299" description="Semaphorin-1A">
    <location>
        <begin position="21"/>
        <end position="712"/>
    </location>
</feature>
<feature type="topological domain" description="Extracellular" evidence="1">
    <location>
        <begin position="21"/>
        <end position="601"/>
    </location>
</feature>
<feature type="transmembrane region" description="Helical" evidence="1">
    <location>
        <begin position="602"/>
        <end position="622"/>
    </location>
</feature>
<feature type="topological domain" description="Cytoplasmic" evidence="1">
    <location>
        <begin position="623"/>
        <end position="712"/>
    </location>
</feature>
<feature type="domain" description="Sema" evidence="2">
    <location>
        <begin position="21"/>
        <end position="483"/>
    </location>
</feature>
<feature type="glycosylation site" description="N-linked (GlcNAc...) asparagine" evidence="1">
    <location>
        <position position="42"/>
    </location>
</feature>
<feature type="glycosylation site" description="N-linked (GlcNAc...) asparagine" evidence="1">
    <location>
        <position position="69"/>
    </location>
</feature>
<feature type="glycosylation site" description="N-linked (GlcNAc...) asparagine" evidence="1">
    <location>
        <position position="161"/>
    </location>
</feature>
<feature type="glycosylation site" description="N-linked (GlcNAc...) asparagine" evidence="1">
    <location>
        <position position="265"/>
    </location>
</feature>
<feature type="disulfide bond" evidence="2">
    <location>
        <begin position="95"/>
        <end position="105"/>
    </location>
</feature>
<feature type="disulfide bond" evidence="2">
    <location>
        <begin position="123"/>
        <end position="132"/>
    </location>
</feature>
<feature type="disulfide bond" evidence="2">
    <location>
        <begin position="242"/>
        <end position="357"/>
    </location>
</feature>
<feature type="disulfide bond" evidence="2">
    <location>
        <begin position="266"/>
        <end position="316"/>
    </location>
</feature>
<feature type="disulfide bond" evidence="2">
    <location>
        <begin position="486"/>
        <end position="503"/>
    </location>
</feature>
<feature type="disulfide bond" evidence="2">
    <location>
        <begin position="495"/>
        <end position="512"/>
    </location>
</feature>
<dbReference type="EMBL" id="L26080">
    <property type="protein sequence ID" value="AAA16609.1"/>
    <property type="molecule type" value="mRNA"/>
</dbReference>
<dbReference type="PIR" id="A49423">
    <property type="entry name" value="A49423"/>
</dbReference>
<dbReference type="SMR" id="Q26972"/>
<dbReference type="GlyCosmos" id="Q26972">
    <property type="glycosylation" value="4 sites, No reported glycans"/>
</dbReference>
<dbReference type="GO" id="GO:0005886">
    <property type="term" value="C:plasma membrane"/>
    <property type="evidence" value="ECO:0007669"/>
    <property type="project" value="TreeGrafter"/>
</dbReference>
<dbReference type="GO" id="GO:0045499">
    <property type="term" value="F:chemorepellent activity"/>
    <property type="evidence" value="ECO:0007669"/>
    <property type="project" value="TreeGrafter"/>
</dbReference>
<dbReference type="GO" id="GO:0030215">
    <property type="term" value="F:semaphorin receptor binding"/>
    <property type="evidence" value="ECO:0007669"/>
    <property type="project" value="InterPro"/>
</dbReference>
<dbReference type="GO" id="GO:0007411">
    <property type="term" value="P:axon guidance"/>
    <property type="evidence" value="ECO:0007669"/>
    <property type="project" value="TreeGrafter"/>
</dbReference>
<dbReference type="GO" id="GO:0030335">
    <property type="term" value="P:positive regulation of cell migration"/>
    <property type="evidence" value="ECO:0007669"/>
    <property type="project" value="TreeGrafter"/>
</dbReference>
<dbReference type="GO" id="GO:0071526">
    <property type="term" value="P:semaphorin-plexin signaling pathway"/>
    <property type="evidence" value="ECO:0007669"/>
    <property type="project" value="TreeGrafter"/>
</dbReference>
<dbReference type="CDD" id="cd11237">
    <property type="entry name" value="Sema_1A"/>
    <property type="match status" value="1"/>
</dbReference>
<dbReference type="FunFam" id="3.30.1680.10:FF:000016">
    <property type="entry name" value="Putative Semaphorin-6B"/>
    <property type="match status" value="1"/>
</dbReference>
<dbReference type="FunFam" id="2.130.10.10:FF:000346">
    <property type="entry name" value="Sema-1a, isoform D"/>
    <property type="match status" value="1"/>
</dbReference>
<dbReference type="Gene3D" id="3.30.1680.10">
    <property type="entry name" value="ligand-binding face of the semaphorins, domain 2"/>
    <property type="match status" value="1"/>
</dbReference>
<dbReference type="Gene3D" id="2.130.10.10">
    <property type="entry name" value="YVTN repeat-like/Quinoprotein amine dehydrogenase"/>
    <property type="match status" value="1"/>
</dbReference>
<dbReference type="InterPro" id="IPR002165">
    <property type="entry name" value="Plexin_repeat"/>
</dbReference>
<dbReference type="InterPro" id="IPR016201">
    <property type="entry name" value="PSI"/>
</dbReference>
<dbReference type="InterPro" id="IPR042068">
    <property type="entry name" value="SEM1A_sema_dom"/>
</dbReference>
<dbReference type="InterPro" id="IPR001627">
    <property type="entry name" value="Semap_dom"/>
</dbReference>
<dbReference type="InterPro" id="IPR036352">
    <property type="entry name" value="Semap_dom_sf"/>
</dbReference>
<dbReference type="InterPro" id="IPR027231">
    <property type="entry name" value="Semaphorin"/>
</dbReference>
<dbReference type="InterPro" id="IPR015943">
    <property type="entry name" value="WD40/YVTN_repeat-like_dom_sf"/>
</dbReference>
<dbReference type="PANTHER" id="PTHR11036:SF131">
    <property type="entry name" value="MIP07328P"/>
    <property type="match status" value="1"/>
</dbReference>
<dbReference type="PANTHER" id="PTHR11036">
    <property type="entry name" value="SEMAPHORIN"/>
    <property type="match status" value="1"/>
</dbReference>
<dbReference type="Pfam" id="PF01437">
    <property type="entry name" value="PSI"/>
    <property type="match status" value="1"/>
</dbReference>
<dbReference type="Pfam" id="PF01403">
    <property type="entry name" value="Sema"/>
    <property type="match status" value="1"/>
</dbReference>
<dbReference type="SMART" id="SM00423">
    <property type="entry name" value="PSI"/>
    <property type="match status" value="1"/>
</dbReference>
<dbReference type="SMART" id="SM00630">
    <property type="entry name" value="Sema"/>
    <property type="match status" value="1"/>
</dbReference>
<dbReference type="SUPFAM" id="SSF103575">
    <property type="entry name" value="Plexin repeat"/>
    <property type="match status" value="1"/>
</dbReference>
<dbReference type="SUPFAM" id="SSF101912">
    <property type="entry name" value="Sema domain"/>
    <property type="match status" value="1"/>
</dbReference>
<dbReference type="PROSITE" id="PS51004">
    <property type="entry name" value="SEMA"/>
    <property type="match status" value="1"/>
</dbReference>